<sequence>MDYKETLLMPKTDFPMRGNLPKREPEMQKKWEEMDIYRKVQERTKGRPLFVLHDGPPYANGDIHMGHALNKILKDIIVRYKSMSGYCAPYVPGWDTHGLPIETALAKQGVDRKSMSVAEFRKRCEQYAYEQIDNQRRQFKRLGVRGDWDNPYITLKPEYEAQQIKVFGEMAKKGLIYKGLKPVYWSPSSESALAEAEIEYKDKRSPSIYVAFPVKNGKGVLEGDERIVIWTTTPWTIPANLAIAVHPDLDYHVVDVSGKRYVVAAALAESVAKEIGWDAWSVVKTVKGKELEYVVARHPFYERDSLVVCGEHVTTDAGTGCVHTAPGHGEDDFLVGQKYGLPVLCPVDERGYMTEEAPGFAGMFYEDANKAITQKLEEVGALLKLGFITHSYPHDWRTKQPTIFRATTQWFASIDKIRNELLQAIKETKWIPEWGEIRIHNMVRDRGDWCISRQRAWGVPIPVFYGENGEPIITDETIEHVSNLFRQYGSNVWFEREAKDLLPEGFTHPSSPNGIFTKETDIMDVWFDSGSSHQAVLVERDDLVRPADLYLEGSDQYRGWFNSSLSTAVAVTGKAPYKGVLSHGFVLDGEGRKMSKSLGNVVVPAKVMEQFGADILRLWVASVDYQADVRISDHILKQVSEVYRKIRNTFRFMLGNLFDFDPNQNAVPIGELGEVDRYMLAKLNKLIAKVKKAYDSYDFAAVYHEMNHFCTVELSAFYLDMAKDILYIEAADSRARRAVQTVLYETVVALAKLIAPILPHTADEVWEHIPNRRENVESVQLTDMPEPIAIDGEEALLAKWDAFMDVRDDIFKALENARNEKVIGKSLTASVIVYPKDEARKLLASLDADLRQLLIVSAFSIADEPYDAAPAEAERLDHVAVIVRPAEGETCERCWTVTKEVGADPSHPTLCPRCAHIVNEHYSA</sequence>
<evidence type="ECO:0000255" key="1">
    <source>
        <dbReference type="HAMAP-Rule" id="MF_02002"/>
    </source>
</evidence>
<name>SYI_GEOKA</name>
<proteinExistence type="inferred from homology"/>
<organism>
    <name type="scientific">Geobacillus kaustophilus (strain HTA426)</name>
    <dbReference type="NCBI Taxonomy" id="235909"/>
    <lineage>
        <taxon>Bacteria</taxon>
        <taxon>Bacillati</taxon>
        <taxon>Bacillota</taxon>
        <taxon>Bacilli</taxon>
        <taxon>Bacillales</taxon>
        <taxon>Anoxybacillaceae</taxon>
        <taxon>Geobacillus</taxon>
        <taxon>Geobacillus thermoleovorans group</taxon>
    </lineage>
</organism>
<comment type="function">
    <text evidence="1">Catalyzes the attachment of isoleucine to tRNA(Ile). As IleRS can inadvertently accommodate and process structurally similar amino acids such as valine, to avoid such errors it has two additional distinct tRNA(Ile)-dependent editing activities. One activity is designated as 'pretransfer' editing and involves the hydrolysis of activated Val-AMP. The other activity is designated 'posttransfer' editing and involves deacylation of mischarged Val-tRNA(Ile).</text>
</comment>
<comment type="catalytic activity">
    <reaction evidence="1">
        <text>tRNA(Ile) + L-isoleucine + ATP = L-isoleucyl-tRNA(Ile) + AMP + diphosphate</text>
        <dbReference type="Rhea" id="RHEA:11060"/>
        <dbReference type="Rhea" id="RHEA-COMP:9666"/>
        <dbReference type="Rhea" id="RHEA-COMP:9695"/>
        <dbReference type="ChEBI" id="CHEBI:30616"/>
        <dbReference type="ChEBI" id="CHEBI:33019"/>
        <dbReference type="ChEBI" id="CHEBI:58045"/>
        <dbReference type="ChEBI" id="CHEBI:78442"/>
        <dbReference type="ChEBI" id="CHEBI:78528"/>
        <dbReference type="ChEBI" id="CHEBI:456215"/>
        <dbReference type="EC" id="6.1.1.5"/>
    </reaction>
</comment>
<comment type="cofactor">
    <cofactor evidence="1">
        <name>Zn(2+)</name>
        <dbReference type="ChEBI" id="CHEBI:29105"/>
    </cofactor>
    <text evidence="1">Binds 1 zinc ion per subunit.</text>
</comment>
<comment type="subunit">
    <text evidence="1">Monomer.</text>
</comment>
<comment type="subcellular location">
    <subcellularLocation>
        <location evidence="1">Cytoplasm</location>
    </subcellularLocation>
</comment>
<comment type="domain">
    <text evidence="1">IleRS has two distinct active sites: one for aminoacylation and one for editing. The misactivated valine is translocated from the active site to the editing site, which sterically excludes the correctly activated isoleucine. The single editing site contains two valyl binding pockets, one specific for each substrate (Val-AMP or Val-tRNA(Ile)).</text>
</comment>
<comment type="similarity">
    <text evidence="1">Belongs to the class-I aminoacyl-tRNA synthetase family. IleS type 1 subfamily.</text>
</comment>
<accession>Q5L0V9</accession>
<reference key="1">
    <citation type="journal article" date="2004" name="Nucleic Acids Res.">
        <title>Thermoadaptation trait revealed by the genome sequence of thermophilic Geobacillus kaustophilus.</title>
        <authorList>
            <person name="Takami H."/>
            <person name="Takaki Y."/>
            <person name="Chee G.-J."/>
            <person name="Nishi S."/>
            <person name="Shimamura S."/>
            <person name="Suzuki H."/>
            <person name="Matsui S."/>
            <person name="Uchiyama I."/>
        </authorList>
    </citation>
    <scope>NUCLEOTIDE SEQUENCE [LARGE SCALE GENOMIC DNA]</scope>
    <source>
        <strain>HTA426</strain>
    </source>
</reference>
<protein>
    <recommendedName>
        <fullName evidence="1">Isoleucine--tRNA ligase</fullName>
        <ecNumber evidence="1">6.1.1.5</ecNumber>
    </recommendedName>
    <alternativeName>
        <fullName evidence="1">Isoleucyl-tRNA synthetase</fullName>
        <shortName evidence="1">IleRS</shortName>
    </alternativeName>
</protein>
<keyword id="KW-0030">Aminoacyl-tRNA synthetase</keyword>
<keyword id="KW-0067">ATP-binding</keyword>
<keyword id="KW-0963">Cytoplasm</keyword>
<keyword id="KW-0436">Ligase</keyword>
<keyword id="KW-0479">Metal-binding</keyword>
<keyword id="KW-0547">Nucleotide-binding</keyword>
<keyword id="KW-0648">Protein biosynthesis</keyword>
<keyword id="KW-1185">Reference proteome</keyword>
<keyword id="KW-0862">Zinc</keyword>
<feature type="chain" id="PRO_0000098390" description="Isoleucine--tRNA ligase">
    <location>
        <begin position="1"/>
        <end position="924"/>
    </location>
</feature>
<feature type="short sequence motif" description="'HIGH' region">
    <location>
        <begin position="57"/>
        <end position="67"/>
    </location>
</feature>
<feature type="short sequence motif" description="'KMSKS' region">
    <location>
        <begin position="593"/>
        <end position="597"/>
    </location>
</feature>
<feature type="binding site" evidence="1">
    <location>
        <position position="552"/>
    </location>
    <ligand>
        <name>L-isoleucyl-5'-AMP</name>
        <dbReference type="ChEBI" id="CHEBI:178002"/>
    </ligand>
</feature>
<feature type="binding site" evidence="1">
    <location>
        <position position="596"/>
    </location>
    <ligand>
        <name>ATP</name>
        <dbReference type="ChEBI" id="CHEBI:30616"/>
    </ligand>
</feature>
<feature type="binding site" evidence="1">
    <location>
        <position position="891"/>
    </location>
    <ligand>
        <name>Zn(2+)</name>
        <dbReference type="ChEBI" id="CHEBI:29105"/>
    </ligand>
</feature>
<feature type="binding site" evidence="1">
    <location>
        <position position="894"/>
    </location>
    <ligand>
        <name>Zn(2+)</name>
        <dbReference type="ChEBI" id="CHEBI:29105"/>
    </ligand>
</feature>
<feature type="binding site" evidence="1">
    <location>
        <position position="911"/>
    </location>
    <ligand>
        <name>Zn(2+)</name>
        <dbReference type="ChEBI" id="CHEBI:29105"/>
    </ligand>
</feature>
<feature type="binding site" evidence="1">
    <location>
        <position position="914"/>
    </location>
    <ligand>
        <name>Zn(2+)</name>
        <dbReference type="ChEBI" id="CHEBI:29105"/>
    </ligand>
</feature>
<dbReference type="EC" id="6.1.1.5" evidence="1"/>
<dbReference type="EMBL" id="BA000043">
    <property type="protein sequence ID" value="BAD75421.1"/>
    <property type="molecule type" value="Genomic_DNA"/>
</dbReference>
<dbReference type="RefSeq" id="WP_011230636.1">
    <property type="nucleotide sequence ID" value="NC_006510.1"/>
</dbReference>
<dbReference type="SMR" id="Q5L0V9"/>
<dbReference type="STRING" id="235909.GK1136"/>
<dbReference type="KEGG" id="gka:GK1136"/>
<dbReference type="PATRIC" id="fig|235909.7.peg.1238"/>
<dbReference type="eggNOG" id="COG0060">
    <property type="taxonomic scope" value="Bacteria"/>
</dbReference>
<dbReference type="HOGENOM" id="CLU_001493_7_0_9"/>
<dbReference type="Proteomes" id="UP000001172">
    <property type="component" value="Chromosome"/>
</dbReference>
<dbReference type="GO" id="GO:0005829">
    <property type="term" value="C:cytosol"/>
    <property type="evidence" value="ECO:0007669"/>
    <property type="project" value="TreeGrafter"/>
</dbReference>
<dbReference type="GO" id="GO:0002161">
    <property type="term" value="F:aminoacyl-tRNA deacylase activity"/>
    <property type="evidence" value="ECO:0007669"/>
    <property type="project" value="InterPro"/>
</dbReference>
<dbReference type="GO" id="GO:0005524">
    <property type="term" value="F:ATP binding"/>
    <property type="evidence" value="ECO:0007669"/>
    <property type="project" value="UniProtKB-UniRule"/>
</dbReference>
<dbReference type="GO" id="GO:0004822">
    <property type="term" value="F:isoleucine-tRNA ligase activity"/>
    <property type="evidence" value="ECO:0007669"/>
    <property type="project" value="UniProtKB-UniRule"/>
</dbReference>
<dbReference type="GO" id="GO:0000049">
    <property type="term" value="F:tRNA binding"/>
    <property type="evidence" value="ECO:0007669"/>
    <property type="project" value="InterPro"/>
</dbReference>
<dbReference type="GO" id="GO:0008270">
    <property type="term" value="F:zinc ion binding"/>
    <property type="evidence" value="ECO:0007669"/>
    <property type="project" value="UniProtKB-UniRule"/>
</dbReference>
<dbReference type="GO" id="GO:0006428">
    <property type="term" value="P:isoleucyl-tRNA aminoacylation"/>
    <property type="evidence" value="ECO:0007669"/>
    <property type="project" value="UniProtKB-UniRule"/>
</dbReference>
<dbReference type="CDD" id="cd07960">
    <property type="entry name" value="Anticodon_Ia_Ile_BEm"/>
    <property type="match status" value="1"/>
</dbReference>
<dbReference type="CDD" id="cd00818">
    <property type="entry name" value="IleRS_core"/>
    <property type="match status" value="1"/>
</dbReference>
<dbReference type="FunFam" id="1.10.10.830:FF:000001">
    <property type="entry name" value="Isoleucine--tRNA ligase"/>
    <property type="match status" value="1"/>
</dbReference>
<dbReference type="FunFam" id="1.10.730.20:FF:000001">
    <property type="entry name" value="Isoleucine--tRNA ligase"/>
    <property type="match status" value="1"/>
</dbReference>
<dbReference type="FunFam" id="3.40.50.620:FF:000152">
    <property type="entry name" value="Isoleucine--tRNA ligase"/>
    <property type="match status" value="1"/>
</dbReference>
<dbReference type="Gene3D" id="1.10.730.20">
    <property type="match status" value="1"/>
</dbReference>
<dbReference type="Gene3D" id="3.40.50.620">
    <property type="entry name" value="HUPs"/>
    <property type="match status" value="2"/>
</dbReference>
<dbReference type="Gene3D" id="1.10.10.830">
    <property type="entry name" value="Ile-tRNA synthetase CP2 domain-like"/>
    <property type="match status" value="1"/>
</dbReference>
<dbReference type="HAMAP" id="MF_02002">
    <property type="entry name" value="Ile_tRNA_synth_type1"/>
    <property type="match status" value="1"/>
</dbReference>
<dbReference type="InterPro" id="IPR001412">
    <property type="entry name" value="aa-tRNA-synth_I_CS"/>
</dbReference>
<dbReference type="InterPro" id="IPR002300">
    <property type="entry name" value="aa-tRNA-synth_Ia"/>
</dbReference>
<dbReference type="InterPro" id="IPR033708">
    <property type="entry name" value="Anticodon_Ile_BEm"/>
</dbReference>
<dbReference type="InterPro" id="IPR002301">
    <property type="entry name" value="Ile-tRNA-ligase"/>
</dbReference>
<dbReference type="InterPro" id="IPR023585">
    <property type="entry name" value="Ile-tRNA-ligase_type1"/>
</dbReference>
<dbReference type="InterPro" id="IPR050081">
    <property type="entry name" value="Ile-tRNA_ligase"/>
</dbReference>
<dbReference type="InterPro" id="IPR013155">
    <property type="entry name" value="M/V/L/I-tRNA-synth_anticd-bd"/>
</dbReference>
<dbReference type="InterPro" id="IPR014729">
    <property type="entry name" value="Rossmann-like_a/b/a_fold"/>
</dbReference>
<dbReference type="InterPro" id="IPR009080">
    <property type="entry name" value="tRNAsynth_Ia_anticodon-bd"/>
</dbReference>
<dbReference type="InterPro" id="IPR009008">
    <property type="entry name" value="Val/Leu/Ile-tRNA-synth_edit"/>
</dbReference>
<dbReference type="InterPro" id="IPR010663">
    <property type="entry name" value="Znf_FPG/IleRS"/>
</dbReference>
<dbReference type="NCBIfam" id="TIGR00392">
    <property type="entry name" value="ileS"/>
    <property type="match status" value="1"/>
</dbReference>
<dbReference type="PANTHER" id="PTHR42765:SF1">
    <property type="entry name" value="ISOLEUCINE--TRNA LIGASE, MITOCHONDRIAL"/>
    <property type="match status" value="1"/>
</dbReference>
<dbReference type="PANTHER" id="PTHR42765">
    <property type="entry name" value="SOLEUCYL-TRNA SYNTHETASE"/>
    <property type="match status" value="1"/>
</dbReference>
<dbReference type="Pfam" id="PF08264">
    <property type="entry name" value="Anticodon_1"/>
    <property type="match status" value="1"/>
</dbReference>
<dbReference type="Pfam" id="PF00133">
    <property type="entry name" value="tRNA-synt_1"/>
    <property type="match status" value="1"/>
</dbReference>
<dbReference type="Pfam" id="PF06827">
    <property type="entry name" value="zf-FPG_IleRS"/>
    <property type="match status" value="1"/>
</dbReference>
<dbReference type="PRINTS" id="PR00984">
    <property type="entry name" value="TRNASYNTHILE"/>
</dbReference>
<dbReference type="SUPFAM" id="SSF47323">
    <property type="entry name" value="Anticodon-binding domain of a subclass of class I aminoacyl-tRNA synthetases"/>
    <property type="match status" value="1"/>
</dbReference>
<dbReference type="SUPFAM" id="SSF52374">
    <property type="entry name" value="Nucleotidylyl transferase"/>
    <property type="match status" value="1"/>
</dbReference>
<dbReference type="SUPFAM" id="SSF50677">
    <property type="entry name" value="ValRS/IleRS/LeuRS editing domain"/>
    <property type="match status" value="1"/>
</dbReference>
<dbReference type="PROSITE" id="PS00178">
    <property type="entry name" value="AA_TRNA_LIGASE_I"/>
    <property type="match status" value="1"/>
</dbReference>
<gene>
    <name evidence="1" type="primary">ileS</name>
    <name type="ordered locus">GK1136</name>
</gene>